<comment type="function">
    <text evidence="4">Involved in (+) and (-)-abscisic acid transport (ABA) and in gibberellin import.</text>
</comment>
<comment type="subcellular location">
    <subcellularLocation>
        <location evidence="1">Membrane</location>
        <topology evidence="1">Multi-pass membrane protein</topology>
    </subcellularLocation>
</comment>
<comment type="tissue specificity">
    <text evidence="3">Expressed in siliques and flowers.</text>
</comment>
<comment type="similarity">
    <text evidence="5">Belongs to the major facilitator superfamily. Proton-dependent oligopeptide transporter (POT/PTR) (TC 2.A.17) family.</text>
</comment>
<evidence type="ECO:0000250" key="1"/>
<evidence type="ECO:0000255" key="2"/>
<evidence type="ECO:0000269" key="3">
    <source>
    </source>
</evidence>
<evidence type="ECO:0000269" key="4">
    <source>
    </source>
</evidence>
<evidence type="ECO:0000305" key="5"/>
<protein>
    <recommendedName>
        <fullName>Protein NRT1/ PTR FAMILY 4.1</fullName>
        <shortName>AtNPF4.1</shortName>
    </recommendedName>
    <alternativeName>
        <fullName>Protein ABA-IMPORTING TRANSPORTER 3</fullName>
    </alternativeName>
</protein>
<name>PTR34_ARATH</name>
<reference key="1">
    <citation type="journal article" date="2000" name="DNA Res.">
        <title>Structural analysis of Arabidopsis thaliana chromosome 3. I. Sequence features of the regions of 4,504,864 bp covered by sixty P1 and TAC clones.</title>
        <authorList>
            <person name="Sato S."/>
            <person name="Nakamura Y."/>
            <person name="Kaneko T."/>
            <person name="Katoh T."/>
            <person name="Asamizu E."/>
            <person name="Tabata S."/>
        </authorList>
    </citation>
    <scope>NUCLEOTIDE SEQUENCE [LARGE SCALE GENOMIC DNA]</scope>
    <source>
        <strain>cv. Columbia</strain>
    </source>
</reference>
<reference key="2">
    <citation type="journal article" date="2017" name="Plant J.">
        <title>Araport11: a complete reannotation of the Arabidopsis thaliana reference genome.</title>
        <authorList>
            <person name="Cheng C.Y."/>
            <person name="Krishnakumar V."/>
            <person name="Chan A.P."/>
            <person name="Thibaud-Nissen F."/>
            <person name="Schobel S."/>
            <person name="Town C.D."/>
        </authorList>
    </citation>
    <scope>GENOME REANNOTATION</scope>
    <source>
        <strain>cv. Columbia</strain>
    </source>
</reference>
<reference key="3">
    <citation type="submission" date="2006-07" db="EMBL/GenBank/DDBJ databases">
        <title>Large-scale analysis of RIKEN Arabidopsis full-length (RAFL) cDNAs.</title>
        <authorList>
            <person name="Totoki Y."/>
            <person name="Seki M."/>
            <person name="Ishida J."/>
            <person name="Nakajima M."/>
            <person name="Enju A."/>
            <person name="Kamiya A."/>
            <person name="Narusaka M."/>
            <person name="Shin-i T."/>
            <person name="Nakagawa M."/>
            <person name="Sakamoto N."/>
            <person name="Oishi K."/>
            <person name="Kohara Y."/>
            <person name="Kobayashi M."/>
            <person name="Toyoda A."/>
            <person name="Sakaki Y."/>
            <person name="Sakurai T."/>
            <person name="Iida K."/>
            <person name="Akiyama K."/>
            <person name="Satou M."/>
            <person name="Toyoda T."/>
            <person name="Konagaya A."/>
            <person name="Carninci P."/>
            <person name="Kawai J."/>
            <person name="Hayashizaki Y."/>
            <person name="Shinozaki K."/>
        </authorList>
    </citation>
    <scope>NUCLEOTIDE SEQUENCE [LARGE SCALE MRNA]</scope>
    <source>
        <strain>cv. Columbia</strain>
    </source>
</reference>
<reference key="4">
    <citation type="journal article" date="2007" name="FEBS Lett.">
        <title>Nitrate transporters and peptide transporters.</title>
        <authorList>
            <person name="Tsay Y.F."/>
            <person name="Chiu C.C."/>
            <person name="Tsai C.B."/>
            <person name="Ho C.H."/>
            <person name="Hsu P.K."/>
        </authorList>
    </citation>
    <scope>TISSUE SPECIFICITY</scope>
    <scope>GENE FAMILY</scope>
</reference>
<reference key="5">
    <citation type="journal article" date="2010" name="Plant Cell">
        <title>The Arabidopsis nitrate transporter NRT1.8 functions in nitrate removal from the xylem sap and mediates cadmium tolerance.</title>
        <authorList>
            <person name="Li J.Y."/>
            <person name="Fu Y.L."/>
            <person name="Pike S.M."/>
            <person name="Bao J."/>
            <person name="Tian W."/>
            <person name="Zhang Y."/>
            <person name="Chen C.Z."/>
            <person name="Zhang Y."/>
            <person name="Li H.M."/>
            <person name="Huang J."/>
            <person name="Li L.G."/>
            <person name="Schroeder J.I."/>
            <person name="Gassmann W."/>
            <person name="Gong J.M."/>
        </authorList>
    </citation>
    <scope>GENE FAMILY</scope>
</reference>
<reference key="6">
    <citation type="journal article" date="2012" name="Proc. Natl. Acad. Sci. U.S.A.">
        <title>Identification of an abscisic acid transporter by functional screening using the receptor complex as a sensor.</title>
        <authorList>
            <person name="Kanno Y."/>
            <person name="Hanada A."/>
            <person name="Chiba Y."/>
            <person name="Ichikawa T."/>
            <person name="Nakazawa M."/>
            <person name="Matsui M."/>
            <person name="Koshiba T."/>
            <person name="Kamiya Y."/>
            <person name="Seo M."/>
        </authorList>
    </citation>
    <scope>FUNCTION</scope>
</reference>
<reference key="7">
    <citation type="journal article" date="2014" name="Trends Plant Sci.">
        <title>A unified nomenclature of NITRATE TRANSPORTER 1/PEPTIDE TRANSPORTER family members in plants.</title>
        <authorList>
            <person name="Leran S."/>
            <person name="Varala K."/>
            <person name="Boyer J.C."/>
            <person name="Chiurazzi M."/>
            <person name="Crawford N."/>
            <person name="Daniel-Vedele F."/>
            <person name="David L."/>
            <person name="Dickstein R."/>
            <person name="Fernandez E."/>
            <person name="Forde B."/>
            <person name="Gassmann W."/>
            <person name="Geiger D."/>
            <person name="Gojon A."/>
            <person name="Gong J.M."/>
            <person name="Halkier B.A."/>
            <person name="Harris J.M."/>
            <person name="Hedrich R."/>
            <person name="Limami A.M."/>
            <person name="Rentsch D."/>
            <person name="Seo M."/>
            <person name="Tsay Y.F."/>
            <person name="Zhang M."/>
            <person name="Coruzzi G."/>
            <person name="Lacombe B."/>
        </authorList>
    </citation>
    <scope>GENE FAMILY</scope>
    <scope>NOMENCLATURE</scope>
</reference>
<proteinExistence type="evidence at transcript level"/>
<gene>
    <name type="primary">NPF4.1</name>
    <name type="synonym">AIT3</name>
    <name type="ordered locus">At3g25260</name>
    <name type="ORF">MJL12.27</name>
</gene>
<keyword id="KW-0472">Membrane</keyword>
<keyword id="KW-1185">Reference proteome</keyword>
<keyword id="KW-0812">Transmembrane</keyword>
<keyword id="KW-1133">Transmembrane helix</keyword>
<keyword id="KW-0813">Transport</keyword>
<accession>Q9LSF0</accession>
<accession>Q0WT12</accession>
<feature type="chain" id="PRO_0000399968" description="Protein NRT1/ PTR FAMILY 4.1">
    <location>
        <begin position="1"/>
        <end position="515"/>
    </location>
</feature>
<feature type="transmembrane region" description="Helical" evidence="2">
    <location>
        <begin position="24"/>
        <end position="44"/>
    </location>
</feature>
<feature type="transmembrane region" description="Helical" evidence="2">
    <location>
        <begin position="71"/>
        <end position="91"/>
    </location>
</feature>
<feature type="transmembrane region" description="Helical" evidence="2">
    <location>
        <begin position="93"/>
        <end position="113"/>
    </location>
</feature>
<feature type="transmembrane region" description="Helical" evidence="2">
    <location>
        <begin position="134"/>
        <end position="154"/>
    </location>
</feature>
<feature type="transmembrane region" description="Helical" evidence="2">
    <location>
        <begin position="168"/>
        <end position="188"/>
    </location>
</feature>
<feature type="transmembrane region" description="Helical" evidence="2">
    <location>
        <begin position="204"/>
        <end position="224"/>
    </location>
</feature>
<feature type="transmembrane region" description="Helical" evidence="2">
    <location>
        <begin position="298"/>
        <end position="318"/>
    </location>
</feature>
<feature type="transmembrane region" description="Helical" evidence="2">
    <location>
        <begin position="339"/>
        <end position="359"/>
    </location>
</feature>
<feature type="transmembrane region" description="Helical" evidence="2">
    <location>
        <begin position="381"/>
        <end position="401"/>
    </location>
</feature>
<feature type="transmembrane region" description="Helical" evidence="2">
    <location>
        <begin position="413"/>
        <end position="433"/>
    </location>
</feature>
<feature type="transmembrane region" description="Helical" evidence="2">
    <location>
        <begin position="461"/>
        <end position="481"/>
    </location>
</feature>
<feature type="transmembrane region" description="Helical" evidence="2">
    <location>
        <begin position="492"/>
        <end position="512"/>
    </location>
</feature>
<feature type="sequence conflict" description="In Ref. 3; BAE99736." evidence="5" ref="3">
    <original>V</original>
    <variation>F</variation>
    <location>
        <position position="97"/>
    </location>
</feature>
<feature type="sequence conflict" description="In Ref. 3; BAE99736." evidence="5" ref="3">
    <original>G</original>
    <variation>R</variation>
    <location>
        <position position="151"/>
    </location>
</feature>
<feature type="sequence conflict" description="In Ref. 3; BAE99736." evidence="5" ref="3">
    <original>N</original>
    <variation>Y</variation>
    <location>
        <position position="312"/>
    </location>
</feature>
<dbReference type="EMBL" id="AB026647">
    <property type="protein sequence ID" value="BAB02085.1"/>
    <property type="molecule type" value="Genomic_DNA"/>
</dbReference>
<dbReference type="EMBL" id="CP002686">
    <property type="protein sequence ID" value="AEE77001.1"/>
    <property type="molecule type" value="Genomic_DNA"/>
</dbReference>
<dbReference type="EMBL" id="AK227752">
    <property type="protein sequence ID" value="BAE99736.1"/>
    <property type="molecule type" value="mRNA"/>
</dbReference>
<dbReference type="RefSeq" id="NP_189163.1">
    <property type="nucleotide sequence ID" value="NM_113432.2"/>
</dbReference>
<dbReference type="SMR" id="Q9LSF0"/>
<dbReference type="STRING" id="3702.Q9LSF0"/>
<dbReference type="PaxDb" id="3702-AT3G25260.1"/>
<dbReference type="ProteomicsDB" id="226236"/>
<dbReference type="EnsemblPlants" id="AT3G25260.1">
    <property type="protein sequence ID" value="AT3G25260.1"/>
    <property type="gene ID" value="AT3G25260"/>
</dbReference>
<dbReference type="GeneID" id="822120"/>
<dbReference type="Gramene" id="AT3G25260.1">
    <property type="protein sequence ID" value="AT3G25260.1"/>
    <property type="gene ID" value="AT3G25260"/>
</dbReference>
<dbReference type="KEGG" id="ath:AT3G25260"/>
<dbReference type="Araport" id="AT3G25260"/>
<dbReference type="TAIR" id="AT3G25260">
    <property type="gene designation" value="NPF4.1"/>
</dbReference>
<dbReference type="eggNOG" id="KOG1237">
    <property type="taxonomic scope" value="Eukaryota"/>
</dbReference>
<dbReference type="HOGENOM" id="CLU_009313_4_0_1"/>
<dbReference type="InParanoid" id="Q9LSF0"/>
<dbReference type="OMA" id="ISAFFNW"/>
<dbReference type="PhylomeDB" id="Q9LSF0"/>
<dbReference type="PRO" id="PR:Q9LSF0"/>
<dbReference type="Proteomes" id="UP000006548">
    <property type="component" value="Chromosome 3"/>
</dbReference>
<dbReference type="ExpressionAtlas" id="Q9LSF0">
    <property type="expression patterns" value="baseline and differential"/>
</dbReference>
<dbReference type="GO" id="GO:0016020">
    <property type="term" value="C:membrane"/>
    <property type="evidence" value="ECO:0007669"/>
    <property type="project" value="UniProtKB-SubCell"/>
</dbReference>
<dbReference type="GO" id="GO:0022857">
    <property type="term" value="F:transmembrane transporter activity"/>
    <property type="evidence" value="ECO:0007669"/>
    <property type="project" value="InterPro"/>
</dbReference>
<dbReference type="FunFam" id="1.20.1250.20:FF:000975">
    <property type="entry name" value="Proton-dependent oligopeptide transport family protein"/>
    <property type="match status" value="1"/>
</dbReference>
<dbReference type="Gene3D" id="1.20.1250.20">
    <property type="entry name" value="MFS general substrate transporter like domains"/>
    <property type="match status" value="1"/>
</dbReference>
<dbReference type="InterPro" id="IPR036259">
    <property type="entry name" value="MFS_trans_sf"/>
</dbReference>
<dbReference type="InterPro" id="IPR000109">
    <property type="entry name" value="POT_fam"/>
</dbReference>
<dbReference type="PANTHER" id="PTHR11654">
    <property type="entry name" value="OLIGOPEPTIDE TRANSPORTER-RELATED"/>
    <property type="match status" value="1"/>
</dbReference>
<dbReference type="Pfam" id="PF00854">
    <property type="entry name" value="PTR2"/>
    <property type="match status" value="1"/>
</dbReference>
<dbReference type="SUPFAM" id="SSF103473">
    <property type="entry name" value="MFS general substrate transporter"/>
    <property type="match status" value="2"/>
</dbReference>
<organism>
    <name type="scientific">Arabidopsis thaliana</name>
    <name type="common">Mouse-ear cress</name>
    <dbReference type="NCBI Taxonomy" id="3702"/>
    <lineage>
        <taxon>Eukaryota</taxon>
        <taxon>Viridiplantae</taxon>
        <taxon>Streptophyta</taxon>
        <taxon>Embryophyta</taxon>
        <taxon>Tracheophyta</taxon>
        <taxon>Spermatophyta</taxon>
        <taxon>Magnoliopsida</taxon>
        <taxon>eudicotyledons</taxon>
        <taxon>Gunneridae</taxon>
        <taxon>Pentapetalae</taxon>
        <taxon>rosids</taxon>
        <taxon>malvids</taxon>
        <taxon>Brassicales</taxon>
        <taxon>Brassicaceae</taxon>
        <taxon>Camelineae</taxon>
        <taxon>Arabidopsis</taxon>
    </lineage>
</organism>
<sequence length="515" mass="57161">MQIEMEEKFEDWRGKEAISGKHGGIKAAFIACVVETMENMVFLACSTNFMMYFTKSMNYSTPKAATMVTNFVGTSFLLTIFGGFVADSFLTRFAAFVLFGSIELLGLIMLTLQAHITKLQPQGGKKPSTPQSTVLFTGLYAIAIGVGGVKGSLPAHGGDQIGTRNQRLISGFFNWYFFSVCLGGFLAVTLMVWIEENIGWSSSFTISTAVLASAIFVFVAGCPMYRFKRPAGSPLTRIVNVFVSAARNRNRFVTDAEVVTQNHNSTDKSIHHNKFKFLNKAKLNNKISATQVEETRTFLALLPIFGSTIIMNCCVAQMGTFSVQQGMVTNRKLSRSFEIPVASLNAIPLLCMLSSLALYELFGKRILSNSERSSSFNLKRIGYGLALTSISMAVAAIVEVKRKHEAVHNNIKISVFWLELQFVMLSLSDMLTVGGMLEFFFRESPASMRSMSTALGWCSTAMGFFLSSVLVEVVNGITGWLRDDLNESRLELFYLVLCVLNTLNLFNYIFWAKRY</sequence>